<feature type="signal peptide" evidence="1">
    <location>
        <begin position="1"/>
        <end position="25"/>
    </location>
</feature>
<feature type="chain" id="PRO_0000313583" description="Thrombospondin type-1 domain-containing protein 4">
    <location>
        <begin position="26"/>
        <end position="1018"/>
    </location>
</feature>
<feature type="domain" description="TSP type-1 1" evidence="2">
    <location>
        <begin position="53"/>
        <end position="307"/>
    </location>
</feature>
<feature type="domain" description="TSP type-1 2" evidence="2">
    <location>
        <begin position="676"/>
        <end position="737"/>
    </location>
</feature>
<feature type="domain" description="TSP type-1 3" evidence="2">
    <location>
        <begin position="739"/>
        <end position="792"/>
    </location>
</feature>
<feature type="domain" description="TSP type-1 4" evidence="2">
    <location>
        <begin position="793"/>
        <end position="851"/>
    </location>
</feature>
<feature type="domain" description="TSP type-1 5" evidence="2">
    <location>
        <begin position="852"/>
        <end position="911"/>
    </location>
</feature>
<feature type="domain" description="TSP type-1 6" evidence="2">
    <location>
        <begin position="912"/>
        <end position="968"/>
    </location>
</feature>
<feature type="domain" description="PLAC" evidence="3">
    <location>
        <begin position="971"/>
        <end position="1008"/>
    </location>
</feature>
<feature type="region of interest" description="Disordered" evidence="4">
    <location>
        <begin position="111"/>
        <end position="235"/>
    </location>
</feature>
<feature type="region of interest" description="Disordered" evidence="4">
    <location>
        <begin position="254"/>
        <end position="279"/>
    </location>
</feature>
<feature type="region of interest" description="Disordered" evidence="4">
    <location>
        <begin position="534"/>
        <end position="623"/>
    </location>
</feature>
<feature type="compositionally biased region" description="Basic residues" evidence="4">
    <location>
        <begin position="187"/>
        <end position="200"/>
    </location>
</feature>
<feature type="compositionally biased region" description="Low complexity" evidence="4">
    <location>
        <begin position="201"/>
        <end position="210"/>
    </location>
</feature>
<feature type="compositionally biased region" description="Polar residues" evidence="4">
    <location>
        <begin position="259"/>
        <end position="279"/>
    </location>
</feature>
<feature type="compositionally biased region" description="Basic and acidic residues" evidence="4">
    <location>
        <begin position="556"/>
        <end position="577"/>
    </location>
</feature>
<feature type="compositionally biased region" description="Basic and acidic residues" evidence="4">
    <location>
        <begin position="592"/>
        <end position="603"/>
    </location>
</feature>
<feature type="splice variant" id="VSP_030036" description="In isoform 3." evidence="6">
    <location>
        <begin position="1"/>
        <end position="360"/>
    </location>
</feature>
<feature type="splice variant" id="VSP_054877" description="In isoform 4." evidence="7">
    <original>MVSHFMGSLSVLCFLLLLGFQFVC</original>
    <variation>MFVSYLILTLLHVQTAVLARPGGE</variation>
    <location>
        <begin position="1"/>
        <end position="24"/>
    </location>
</feature>
<feature type="splice variant" id="VSP_054878" description="In isoform 4." evidence="7">
    <location>
        <begin position="25"/>
        <end position="384"/>
    </location>
</feature>
<feature type="splice variant" id="VSP_030037" description="In isoform 3." evidence="6">
    <original>AEKVIDGTPCDQNGTAICVSGQCK</original>
    <variation>MFVSYLILTLLHVQTAVLARPGGE</variation>
    <location>
        <begin position="361"/>
        <end position="384"/>
    </location>
</feature>
<feature type="splice variant" id="VSP_030038" description="In isoform 3." evidence="6">
    <original>NYLALRSRSGRSIINGNWAIDRPGKYEGGGTMFTYKRPNEISSTAGESFLAEGPTNEILDVYMIHQQPNPGVHYEYVIMGTNAISPQVPPHRRPGEPFNGQMVTEGRSQEEGEQKGRNEEKEDLRGEAPE</original>
    <variation>KKKSHLKPATRGSQFSSVKVCSVPAACKLLGTPGRARQPVPAPRELEHDKNSPHCAYLSLYLTSLAQSSWRVFSLFSYVLIYLFSKYLAFNTLFALKRMALQRDRKEKTRAWCIFIKLCGREIQILPGPV</variation>
    <location>
        <begin position="450"/>
        <end position="579"/>
    </location>
</feature>
<feature type="splice variant" id="VSP_030039" description="In isoform 2." evidence="8">
    <original>MIHQQPNPGVHY</original>
    <variation>VSLDVSGLFFGF</variation>
    <location>
        <begin position="512"/>
        <end position="523"/>
    </location>
</feature>
<feature type="splice variant" id="VSP_030040" description="In isoform 2." evidence="8">
    <location>
        <begin position="524"/>
        <end position="1018"/>
    </location>
</feature>
<feature type="splice variant" id="VSP_030041" description="In isoform 3." evidence="6">
    <location>
        <begin position="580"/>
        <end position="1018"/>
    </location>
</feature>
<feature type="sequence variant" id="VAR_087397" description="In AAT12; uncertain significance; results in impaired assembly of FBN1-containing microfibrils." evidence="5">
    <original>Y</original>
    <variation>N</variation>
    <location>
        <position position="321"/>
    </location>
</feature>
<feature type="sequence variant" id="VAR_087398" description="In AAT12; uncertain significance; has no effect on assembly of FBN1-containing microfibrils." evidence="5">
    <original>G</original>
    <variation>D</variation>
    <location>
        <position position="753"/>
    </location>
</feature>
<feature type="sequence variant" id="VAR_087399" description="In AAT12; uncertain significance; results in impaired assembly of FBN1-containing microfibrils." evidence="5">
    <original>R</original>
    <variation>W</variation>
    <location>
        <position position="781"/>
    </location>
</feature>
<feature type="sequence conflict" description="In Ref. 2; BAD18685." evidence="9" ref="2">
    <original>V</original>
    <variation>A</variation>
    <location>
        <position position="104"/>
    </location>
</feature>
<feature type="sequence conflict" description="In Ref. 2; BAD18685." evidence="9" ref="2">
    <original>P</original>
    <variation>S</variation>
    <location>
        <position position="434"/>
    </location>
</feature>
<feature type="sequence conflict" description="In Ref. 2; BAB14673." evidence="9" ref="2">
    <original>C</original>
    <variation>S</variation>
    <location>
        <position position="806"/>
    </location>
</feature>
<keyword id="KW-0025">Alternative splicing</keyword>
<keyword id="KW-0993">Aortic aneurysm</keyword>
<keyword id="KW-0272">Extracellular matrix</keyword>
<keyword id="KW-0378">Hydrolase</keyword>
<keyword id="KW-1267">Proteomics identification</keyword>
<keyword id="KW-1185">Reference proteome</keyword>
<keyword id="KW-0677">Repeat</keyword>
<keyword id="KW-0964">Secreted</keyword>
<keyword id="KW-0732">Signal</keyword>
<sequence>MVSHFMGSLSVLCFLLLLGFQFVCPQPSTQHRKVPQRMAAEGAPEDDGGGGAPGVWGAWGPWSACSRSCSGGVMEQTRPCLPRSYRLRGGQRPGAPARAFADHVVSAVRTSVPLHRSRDETPALAGTDASRQGPTVLRGSRHPQPQGLEVTGDRRSRTRGTIGPGKYGYGKAPYILPLQTDTAHTPQRLRRQKLSSRHSRSQGASSARHGYSSPAHQVPQHGPLYQSDSGPRSGLQAAEAPIYQLPLTHDQGYPAASSLFHSPETSNNHGVGTHGATQSFSQPARSTAISCIGAYRQYKLCNTNVCPESSRSIREVQCASYNNKPFMGRFYEWEPFAEVKGNRKCELNCQAMGYRFYVRQAEKVIDGTPCDQNGTAICVSGQCKSIGCDDYLGSDKVVDKCGVCGGDNTGCQVVSGVFKHALTSLGYHRVVEIPEGATKINITEMYKSNNYLALRSRSGRSIINGNWAIDRPGKYEGGGTMFTYKRPNEISSTAGESFLAEGPTNEILDVYMIHQQPNPGVHYEYVIMGTNAISPQVPPHRRPGEPFNGQMVTEGRSQEEGEQKGRNEEKEDLRGEAPEMFTSESAQTFPVRHPDRFSPHRPDNLVPPAPQPPRRSRDHNWKQLGTTECSTTCGKGSQYPIFRCVHRSTHEEAPESYCDSSMKPTPEEEPCNIFPCPAFWDIGEWSECSKTCGLGMQHRQVLCRQVYANRSLTVQPYRCQHLEKPETTSTCQLKICSEWQIRTDWTSCSVPCGVGQRTRDVKCVSNIGDVVDDEECNMKLRPNDIENCDMGPCAKSWFLTEWSERCSAECGAGVRTRSVVCMTNHVSSLPLEGCGNNRPAEATPCDNGPCTGKVEWFAGSWSQCSIECGSGTQQREVICVRKNADTFEVLDPSECSFLEKPPSQQSCHLKPCGAKWFSTEWSMCSKSCQGGFRVREVRCLSDDMTLSNLCDPQLKPEERESCNPQDCVPEVDENCKDKYYNCNVVVQARLCVYNYYKTACCASCTRVANRQTGFLGSR</sequence>
<reference key="1">
    <citation type="journal article" date="2003" name="Genome Res.">
        <title>The secreted protein discovery initiative (SPDI), a large-scale effort to identify novel human secreted and transmembrane proteins: a bioinformatics assessment.</title>
        <authorList>
            <person name="Clark H.F."/>
            <person name="Gurney A.L."/>
            <person name="Abaya E."/>
            <person name="Baker K."/>
            <person name="Baldwin D.T."/>
            <person name="Brush J."/>
            <person name="Chen J."/>
            <person name="Chow B."/>
            <person name="Chui C."/>
            <person name="Crowley C."/>
            <person name="Currell B."/>
            <person name="Deuel B."/>
            <person name="Dowd P."/>
            <person name="Eaton D."/>
            <person name="Foster J.S."/>
            <person name="Grimaldi C."/>
            <person name="Gu Q."/>
            <person name="Hass P.E."/>
            <person name="Heldens S."/>
            <person name="Huang A."/>
            <person name="Kim H.S."/>
            <person name="Klimowski L."/>
            <person name="Jin Y."/>
            <person name="Johnson S."/>
            <person name="Lee J."/>
            <person name="Lewis L."/>
            <person name="Liao D."/>
            <person name="Mark M.R."/>
            <person name="Robbie E."/>
            <person name="Sanchez C."/>
            <person name="Schoenfeld J."/>
            <person name="Seshagiri S."/>
            <person name="Simmons L."/>
            <person name="Singh J."/>
            <person name="Smith V."/>
            <person name="Stinson J."/>
            <person name="Vagts A."/>
            <person name="Vandlen R.L."/>
            <person name="Watanabe C."/>
            <person name="Wieand D."/>
            <person name="Woods K."/>
            <person name="Xie M.-H."/>
            <person name="Yansura D.G."/>
            <person name="Yi S."/>
            <person name="Yu G."/>
            <person name="Yuan J."/>
            <person name="Zhang M."/>
            <person name="Zhang Z."/>
            <person name="Goddard A.D."/>
            <person name="Wood W.I."/>
            <person name="Godowski P.J."/>
            <person name="Gray A.M."/>
        </authorList>
    </citation>
    <scope>NUCLEOTIDE SEQUENCE [LARGE SCALE MRNA] (ISOFORM 3)</scope>
</reference>
<reference key="2">
    <citation type="journal article" date="2004" name="Nat. Genet.">
        <title>Complete sequencing and characterization of 21,243 full-length human cDNAs.</title>
        <authorList>
            <person name="Ota T."/>
            <person name="Suzuki Y."/>
            <person name="Nishikawa T."/>
            <person name="Otsuki T."/>
            <person name="Sugiyama T."/>
            <person name="Irie R."/>
            <person name="Wakamatsu A."/>
            <person name="Hayashi K."/>
            <person name="Sato H."/>
            <person name="Nagai K."/>
            <person name="Kimura K."/>
            <person name="Makita H."/>
            <person name="Sekine M."/>
            <person name="Obayashi M."/>
            <person name="Nishi T."/>
            <person name="Shibahara T."/>
            <person name="Tanaka T."/>
            <person name="Ishii S."/>
            <person name="Yamamoto J."/>
            <person name="Saito K."/>
            <person name="Kawai Y."/>
            <person name="Isono Y."/>
            <person name="Nakamura Y."/>
            <person name="Nagahari K."/>
            <person name="Murakami K."/>
            <person name="Yasuda T."/>
            <person name="Iwayanagi T."/>
            <person name="Wagatsuma M."/>
            <person name="Shiratori A."/>
            <person name="Sudo H."/>
            <person name="Hosoiri T."/>
            <person name="Kaku Y."/>
            <person name="Kodaira H."/>
            <person name="Kondo H."/>
            <person name="Sugawara M."/>
            <person name="Takahashi M."/>
            <person name="Kanda K."/>
            <person name="Yokoi T."/>
            <person name="Furuya T."/>
            <person name="Kikkawa E."/>
            <person name="Omura Y."/>
            <person name="Abe K."/>
            <person name="Kamihara K."/>
            <person name="Katsuta N."/>
            <person name="Sato K."/>
            <person name="Tanikawa M."/>
            <person name="Yamazaki M."/>
            <person name="Ninomiya K."/>
            <person name="Ishibashi T."/>
            <person name="Yamashita H."/>
            <person name="Murakawa K."/>
            <person name="Fujimori K."/>
            <person name="Tanai H."/>
            <person name="Kimata M."/>
            <person name="Watanabe M."/>
            <person name="Hiraoka S."/>
            <person name="Chiba Y."/>
            <person name="Ishida S."/>
            <person name="Ono Y."/>
            <person name="Takiguchi S."/>
            <person name="Watanabe S."/>
            <person name="Yosida M."/>
            <person name="Hotuta T."/>
            <person name="Kusano J."/>
            <person name="Kanehori K."/>
            <person name="Takahashi-Fujii A."/>
            <person name="Hara H."/>
            <person name="Tanase T.-O."/>
            <person name="Nomura Y."/>
            <person name="Togiya S."/>
            <person name="Komai F."/>
            <person name="Hara R."/>
            <person name="Takeuchi K."/>
            <person name="Arita M."/>
            <person name="Imose N."/>
            <person name="Musashino K."/>
            <person name="Yuuki H."/>
            <person name="Oshima A."/>
            <person name="Sasaki N."/>
            <person name="Aotsuka S."/>
            <person name="Yoshikawa Y."/>
            <person name="Matsunawa H."/>
            <person name="Ichihara T."/>
            <person name="Shiohata N."/>
            <person name="Sano S."/>
            <person name="Moriya S."/>
            <person name="Momiyama H."/>
            <person name="Satoh N."/>
            <person name="Takami S."/>
            <person name="Terashima Y."/>
            <person name="Suzuki O."/>
            <person name="Nakagawa S."/>
            <person name="Senoh A."/>
            <person name="Mizoguchi H."/>
            <person name="Goto Y."/>
            <person name="Shimizu F."/>
            <person name="Wakebe H."/>
            <person name="Hishigaki H."/>
            <person name="Watanabe T."/>
            <person name="Sugiyama A."/>
            <person name="Takemoto M."/>
            <person name="Kawakami B."/>
            <person name="Yamazaki M."/>
            <person name="Watanabe K."/>
            <person name="Kumagai A."/>
            <person name="Itakura S."/>
            <person name="Fukuzumi Y."/>
            <person name="Fujimori Y."/>
            <person name="Komiyama M."/>
            <person name="Tashiro H."/>
            <person name="Tanigami A."/>
            <person name="Fujiwara T."/>
            <person name="Ono T."/>
            <person name="Yamada K."/>
            <person name="Fujii Y."/>
            <person name="Ozaki K."/>
            <person name="Hirao M."/>
            <person name="Ohmori Y."/>
            <person name="Kawabata A."/>
            <person name="Hikiji T."/>
            <person name="Kobatake N."/>
            <person name="Inagaki H."/>
            <person name="Ikema Y."/>
            <person name="Okamoto S."/>
            <person name="Okitani R."/>
            <person name="Kawakami T."/>
            <person name="Noguchi S."/>
            <person name="Itoh T."/>
            <person name="Shigeta K."/>
            <person name="Senba T."/>
            <person name="Matsumura K."/>
            <person name="Nakajima Y."/>
            <person name="Mizuno T."/>
            <person name="Morinaga M."/>
            <person name="Sasaki M."/>
            <person name="Togashi T."/>
            <person name="Oyama M."/>
            <person name="Hata H."/>
            <person name="Watanabe M."/>
            <person name="Komatsu T."/>
            <person name="Mizushima-Sugano J."/>
            <person name="Satoh T."/>
            <person name="Shirai Y."/>
            <person name="Takahashi Y."/>
            <person name="Nakagawa K."/>
            <person name="Okumura K."/>
            <person name="Nagase T."/>
            <person name="Nomura N."/>
            <person name="Kikuchi H."/>
            <person name="Masuho Y."/>
            <person name="Yamashita R."/>
            <person name="Nakai K."/>
            <person name="Yada T."/>
            <person name="Nakamura Y."/>
            <person name="Ohara O."/>
            <person name="Isogai T."/>
            <person name="Sugano S."/>
        </authorList>
    </citation>
    <scope>NUCLEOTIDE SEQUENCE [LARGE SCALE MRNA] (ISOFORMS 1 AND 4)</scope>
    <source>
        <tissue>Mammary gland</tissue>
        <tissue>Placenta</tissue>
    </source>
</reference>
<reference key="3">
    <citation type="journal article" date="2006" name="Nature">
        <title>Analysis of the DNA sequence and duplication history of human chromosome 15.</title>
        <authorList>
            <person name="Zody M.C."/>
            <person name="Garber M."/>
            <person name="Sharpe T."/>
            <person name="Young S.K."/>
            <person name="Rowen L."/>
            <person name="O'Neill K."/>
            <person name="Whittaker C.A."/>
            <person name="Kamal M."/>
            <person name="Chang J.L."/>
            <person name="Cuomo C.A."/>
            <person name="Dewar K."/>
            <person name="FitzGerald M.G."/>
            <person name="Kodira C.D."/>
            <person name="Madan A."/>
            <person name="Qin S."/>
            <person name="Yang X."/>
            <person name="Abbasi N."/>
            <person name="Abouelleil A."/>
            <person name="Arachchi H.M."/>
            <person name="Baradarani L."/>
            <person name="Birditt B."/>
            <person name="Bloom S."/>
            <person name="Bloom T."/>
            <person name="Borowsky M.L."/>
            <person name="Burke J."/>
            <person name="Butler J."/>
            <person name="Cook A."/>
            <person name="DeArellano K."/>
            <person name="DeCaprio D."/>
            <person name="Dorris L. III"/>
            <person name="Dors M."/>
            <person name="Eichler E.E."/>
            <person name="Engels R."/>
            <person name="Fahey J."/>
            <person name="Fleetwood P."/>
            <person name="Friedman C."/>
            <person name="Gearin G."/>
            <person name="Hall J.L."/>
            <person name="Hensley G."/>
            <person name="Johnson E."/>
            <person name="Jones C."/>
            <person name="Kamat A."/>
            <person name="Kaur A."/>
            <person name="Locke D.P."/>
            <person name="Madan A."/>
            <person name="Munson G."/>
            <person name="Jaffe D.B."/>
            <person name="Lui A."/>
            <person name="Macdonald P."/>
            <person name="Mauceli E."/>
            <person name="Naylor J.W."/>
            <person name="Nesbitt R."/>
            <person name="Nicol R."/>
            <person name="O'Leary S.B."/>
            <person name="Ratcliffe A."/>
            <person name="Rounsley S."/>
            <person name="She X."/>
            <person name="Sneddon K.M.B."/>
            <person name="Stewart S."/>
            <person name="Sougnez C."/>
            <person name="Stone S.M."/>
            <person name="Topham K."/>
            <person name="Vincent D."/>
            <person name="Wang S."/>
            <person name="Zimmer A.R."/>
            <person name="Birren B.W."/>
            <person name="Hood L."/>
            <person name="Lander E.S."/>
            <person name="Nusbaum C."/>
        </authorList>
    </citation>
    <scope>NUCLEOTIDE SEQUENCE [LARGE SCALE GENOMIC DNA]</scope>
</reference>
<reference key="4">
    <citation type="journal article" date="2004" name="Genome Res.">
        <title>The status, quality, and expansion of the NIH full-length cDNA project: the Mammalian Gene Collection (MGC).</title>
        <authorList>
            <consortium name="The MGC Project Team"/>
        </authorList>
    </citation>
    <scope>NUCLEOTIDE SEQUENCE [LARGE SCALE MRNA] (ISOFORM 1)</scope>
</reference>
<reference key="5">
    <citation type="journal article" date="2007" name="BMC Genomics">
        <title>The full-ORF clone resource of the German cDNA consortium.</title>
        <authorList>
            <person name="Bechtel S."/>
            <person name="Rosenfelder H."/>
            <person name="Duda A."/>
            <person name="Schmidt C.P."/>
            <person name="Ernst U."/>
            <person name="Wellenreuther R."/>
            <person name="Mehrle A."/>
            <person name="Schuster C."/>
            <person name="Bahr A."/>
            <person name="Bloecker H."/>
            <person name="Heubner D."/>
            <person name="Hoerlein A."/>
            <person name="Michel G."/>
            <person name="Wedler H."/>
            <person name="Koehrer K."/>
            <person name="Ottenwaelder B."/>
            <person name="Poustka A."/>
            <person name="Wiemann S."/>
            <person name="Schupp I."/>
        </authorList>
    </citation>
    <scope>NUCLEOTIDE SEQUENCE [LARGE SCALE MRNA] OF 203-1018 (ISOFORM 2)</scope>
    <source>
        <tissue>Uterus</tissue>
    </source>
</reference>
<reference key="6">
    <citation type="journal article" date="2021" name="Genet. Med.">
        <title>Pathogenic variants in THSD4, encoding the ADAMTS-like 6 protein, predispose to inherited thoracic aortic aneurysm.</title>
        <authorList>
            <person name="Elbitar S."/>
            <person name="Renard M."/>
            <person name="Arnaud P."/>
            <person name="Hanna N."/>
            <person name="Jacob M.P."/>
            <person name="Guo D.C."/>
            <person name="Tsutsui K."/>
            <person name="Gross M.S."/>
            <person name="Kessler K."/>
            <person name="Tosolini L."/>
            <person name="Dattilo V."/>
            <person name="Dupont S."/>
            <person name="Jonquet J."/>
            <person name="Langeois M."/>
            <person name="Benarroch L."/>
            <person name="Aubart M."/>
            <person name="Ghaleb Y."/>
            <person name="Abou Khalil Y."/>
            <person name="Varret M."/>
            <person name="El Khoury P."/>
            <person name="Ho-Tin-Noe B."/>
            <person name="Alembik Y."/>
            <person name="Gaertner S."/>
            <person name="Isidor B."/>
            <person name="Gouya L."/>
            <person name="Milleron O."/>
            <person name="Sekiguchi K."/>
            <person name="Milewicz D."/>
            <person name="De Backer J."/>
            <person name="Le Goff C."/>
            <person name="Michel J.B."/>
            <person name="Jondeau G."/>
            <person name="Sakai L.Y."/>
            <person name="Boileau C."/>
            <person name="Abifadel M."/>
        </authorList>
    </citation>
    <scope>INVOLVEMENT IN AAT12</scope>
    <scope>VARIANTS AAT12 ASN-321; ASP-753 AND TRP-781</scope>
    <scope>CHARACTERIZATION OF VARIANTS AAT12 ASN-321; ASP-753 AND TRP-781</scope>
    <scope>FUNCTION</scope>
    <scope>SUBUNIT</scope>
    <scope>SUBCELLULAR LOCATION</scope>
</reference>
<organism>
    <name type="scientific">Homo sapiens</name>
    <name type="common">Human</name>
    <dbReference type="NCBI Taxonomy" id="9606"/>
    <lineage>
        <taxon>Eukaryota</taxon>
        <taxon>Metazoa</taxon>
        <taxon>Chordata</taxon>
        <taxon>Craniata</taxon>
        <taxon>Vertebrata</taxon>
        <taxon>Euteleostomi</taxon>
        <taxon>Mammalia</taxon>
        <taxon>Eutheria</taxon>
        <taxon>Euarchontoglires</taxon>
        <taxon>Primates</taxon>
        <taxon>Haplorrhini</taxon>
        <taxon>Catarrhini</taxon>
        <taxon>Hominidae</taxon>
        <taxon>Homo</taxon>
    </lineage>
</organism>
<gene>
    <name type="primary">THSD4</name>
    <name type="ORF">UNQ9334/PRO34005</name>
</gene>
<evidence type="ECO:0000255" key="1"/>
<evidence type="ECO:0000255" key="2">
    <source>
        <dbReference type="PROSITE-ProRule" id="PRU00210"/>
    </source>
</evidence>
<evidence type="ECO:0000255" key="3">
    <source>
        <dbReference type="PROSITE-ProRule" id="PRU00233"/>
    </source>
</evidence>
<evidence type="ECO:0000256" key="4">
    <source>
        <dbReference type="SAM" id="MobiDB-lite"/>
    </source>
</evidence>
<evidence type="ECO:0000269" key="5">
    <source>
    </source>
</evidence>
<evidence type="ECO:0000303" key="6">
    <source>
    </source>
</evidence>
<evidence type="ECO:0000303" key="7">
    <source>
    </source>
</evidence>
<evidence type="ECO:0000303" key="8">
    <source>
    </source>
</evidence>
<evidence type="ECO:0000305" key="9"/>
<accession>Q6ZMP0</accession>
<accession>B2RTY3</accession>
<accession>B4DR13</accession>
<accession>Q6MZI3</accession>
<accession>Q6UXZ8</accession>
<accession>Q9H8E4</accession>
<dbReference type="EMBL" id="AY358143">
    <property type="protein sequence ID" value="AAQ88510.1"/>
    <property type="molecule type" value="mRNA"/>
</dbReference>
<dbReference type="EMBL" id="AK023772">
    <property type="protein sequence ID" value="BAB14673.1"/>
    <property type="status" value="ALT_INIT"/>
    <property type="molecule type" value="mRNA"/>
</dbReference>
<dbReference type="EMBL" id="AK131551">
    <property type="protein sequence ID" value="BAD18685.1"/>
    <property type="molecule type" value="mRNA"/>
</dbReference>
<dbReference type="EMBL" id="AK299056">
    <property type="protein sequence ID" value="BAG61125.1"/>
    <property type="molecule type" value="mRNA"/>
</dbReference>
<dbReference type="EMBL" id="AC015711">
    <property type="status" value="NOT_ANNOTATED_CDS"/>
    <property type="molecule type" value="Genomic_DNA"/>
</dbReference>
<dbReference type="EMBL" id="AC026636">
    <property type="status" value="NOT_ANNOTATED_CDS"/>
    <property type="molecule type" value="Genomic_DNA"/>
</dbReference>
<dbReference type="EMBL" id="AC064799">
    <property type="status" value="NOT_ANNOTATED_CDS"/>
    <property type="molecule type" value="Genomic_DNA"/>
</dbReference>
<dbReference type="EMBL" id="AC068181">
    <property type="status" value="NOT_ANNOTATED_CDS"/>
    <property type="molecule type" value="Genomic_DNA"/>
</dbReference>
<dbReference type="EMBL" id="AC108861">
    <property type="status" value="NOT_ANNOTATED_CDS"/>
    <property type="molecule type" value="Genomic_DNA"/>
</dbReference>
<dbReference type="EMBL" id="AC104938">
    <property type="status" value="NOT_ANNOTATED_CDS"/>
    <property type="molecule type" value="Genomic_DNA"/>
</dbReference>
<dbReference type="EMBL" id="AC104943">
    <property type="status" value="NOT_ANNOTATED_CDS"/>
    <property type="molecule type" value="Genomic_DNA"/>
</dbReference>
<dbReference type="EMBL" id="AC105132">
    <property type="status" value="NOT_ANNOTATED_CDS"/>
    <property type="molecule type" value="Genomic_DNA"/>
</dbReference>
<dbReference type="EMBL" id="BC140868">
    <property type="protein sequence ID" value="AAI40869.1"/>
    <property type="molecule type" value="mRNA"/>
</dbReference>
<dbReference type="EMBL" id="BX641106">
    <property type="protein sequence ID" value="CAE46049.1"/>
    <property type="molecule type" value="mRNA"/>
</dbReference>
<dbReference type="CCDS" id="CCDS10238.2">
    <molecule id="Q6ZMP0-1"/>
</dbReference>
<dbReference type="CCDS" id="CCDS66817.1">
    <molecule id="Q6ZMP0-4"/>
</dbReference>
<dbReference type="RefSeq" id="NP_001273358.1">
    <molecule id="Q6ZMP0-4"/>
    <property type="nucleotide sequence ID" value="NM_001286429.2"/>
</dbReference>
<dbReference type="RefSeq" id="NP_001381461.1">
    <molecule id="Q6ZMP0-1"/>
    <property type="nucleotide sequence ID" value="NM_001394532.1"/>
</dbReference>
<dbReference type="RefSeq" id="NP_079093.2">
    <molecule id="Q6ZMP0-1"/>
    <property type="nucleotide sequence ID" value="NM_024817.3"/>
</dbReference>
<dbReference type="RefSeq" id="XP_006720755.1">
    <property type="nucleotide sequence ID" value="XM_006720692.3"/>
</dbReference>
<dbReference type="RefSeq" id="XP_047289036.1">
    <molecule id="Q6ZMP0-1"/>
    <property type="nucleotide sequence ID" value="XM_047433080.1"/>
</dbReference>
<dbReference type="RefSeq" id="XP_054234821.1">
    <molecule id="Q6ZMP0-1"/>
    <property type="nucleotide sequence ID" value="XM_054378846.1"/>
</dbReference>
<dbReference type="SMR" id="Q6ZMP0"/>
<dbReference type="BioGRID" id="122963">
    <property type="interactions" value="97"/>
</dbReference>
<dbReference type="FunCoup" id="Q6ZMP0">
    <property type="interactions" value="196"/>
</dbReference>
<dbReference type="IntAct" id="Q6ZMP0">
    <property type="interactions" value="48"/>
</dbReference>
<dbReference type="STRING" id="9606.ENSP00000347484"/>
<dbReference type="GlyConnect" id="1807">
    <property type="glycosylation" value="6 N-Linked glycans (3 sites)"/>
</dbReference>
<dbReference type="GlyCosmos" id="Q6ZMP0">
    <property type="glycosylation" value="6 sites, 7 glycans"/>
</dbReference>
<dbReference type="GlyGen" id="Q6ZMP0">
    <property type="glycosylation" value="17 sites, 40 N-linked glycans (3 sites), 3 O-linked glycans (13 sites)"/>
</dbReference>
<dbReference type="iPTMnet" id="Q6ZMP0"/>
<dbReference type="PhosphoSitePlus" id="Q6ZMP0"/>
<dbReference type="BioMuta" id="THSD4"/>
<dbReference type="DMDM" id="166229088"/>
<dbReference type="jPOST" id="Q6ZMP0"/>
<dbReference type="MassIVE" id="Q6ZMP0"/>
<dbReference type="PaxDb" id="9606-ENSP00000347484"/>
<dbReference type="PeptideAtlas" id="Q6ZMP0"/>
<dbReference type="ProteomicsDB" id="4917"/>
<dbReference type="ProteomicsDB" id="67896">
    <molecule id="Q6ZMP0-1"/>
</dbReference>
<dbReference type="ProteomicsDB" id="67897">
    <molecule id="Q6ZMP0-2"/>
</dbReference>
<dbReference type="ProteomicsDB" id="67898">
    <molecule id="Q6ZMP0-3"/>
</dbReference>
<dbReference type="Pumba" id="Q6ZMP0"/>
<dbReference type="Antibodypedia" id="26512">
    <property type="antibodies" value="10 antibodies from 8 providers"/>
</dbReference>
<dbReference type="DNASU" id="79875"/>
<dbReference type="Ensembl" id="ENST00000261862.8">
    <molecule id="Q6ZMP0-1"/>
    <property type="protein sequence ID" value="ENSP00000261862.8"/>
    <property type="gene ID" value="ENSG00000187720.15"/>
</dbReference>
<dbReference type="Ensembl" id="ENST00000355327.7">
    <molecule id="Q6ZMP0-1"/>
    <property type="protein sequence ID" value="ENSP00000347484.3"/>
    <property type="gene ID" value="ENSG00000187720.15"/>
</dbReference>
<dbReference type="Ensembl" id="ENST00000357769.4">
    <molecule id="Q6ZMP0-4"/>
    <property type="protein sequence ID" value="ENSP00000350413.4"/>
    <property type="gene ID" value="ENSG00000187720.15"/>
</dbReference>
<dbReference type="GeneID" id="79875"/>
<dbReference type="KEGG" id="hsa:79875"/>
<dbReference type="MANE-Select" id="ENST00000261862.8">
    <property type="protein sequence ID" value="ENSP00000261862.8"/>
    <property type="RefSeq nucleotide sequence ID" value="NM_024817.3"/>
    <property type="RefSeq protein sequence ID" value="NP_079093.2"/>
</dbReference>
<dbReference type="UCSC" id="uc002atb.2">
    <molecule id="Q6ZMP0-1"/>
    <property type="organism name" value="human"/>
</dbReference>
<dbReference type="AGR" id="HGNC:25835"/>
<dbReference type="CTD" id="79875"/>
<dbReference type="DisGeNET" id="79875"/>
<dbReference type="GeneCards" id="THSD4"/>
<dbReference type="HGNC" id="HGNC:25835">
    <property type="gene designation" value="THSD4"/>
</dbReference>
<dbReference type="HPA" id="ENSG00000187720">
    <property type="expression patterns" value="Tissue enhanced (cervix, esophagus)"/>
</dbReference>
<dbReference type="MalaCards" id="THSD4"/>
<dbReference type="MIM" id="614476">
    <property type="type" value="gene"/>
</dbReference>
<dbReference type="MIM" id="619825">
    <property type="type" value="phenotype"/>
</dbReference>
<dbReference type="neXtProt" id="NX_Q6ZMP0"/>
<dbReference type="OpenTargets" id="ENSG00000187720"/>
<dbReference type="Orphanet" id="91387">
    <property type="disease" value="Familial thoracic aortic aneurysm and aortic dissection"/>
</dbReference>
<dbReference type="PharmGKB" id="PA143485631"/>
<dbReference type="VEuPathDB" id="HostDB:ENSG00000187720"/>
<dbReference type="eggNOG" id="KOG3538">
    <property type="taxonomic scope" value="Eukaryota"/>
</dbReference>
<dbReference type="eggNOG" id="KOG4597">
    <property type="taxonomic scope" value="Eukaryota"/>
</dbReference>
<dbReference type="GeneTree" id="ENSGT00940000156594"/>
<dbReference type="HOGENOM" id="CLU_000660_6_0_1"/>
<dbReference type="InParanoid" id="Q6ZMP0"/>
<dbReference type="OMA" id="SQRRCMH"/>
<dbReference type="OrthoDB" id="10062690at2759"/>
<dbReference type="PAN-GO" id="Q6ZMP0">
    <property type="GO annotations" value="0 GO annotations based on evolutionary models"/>
</dbReference>
<dbReference type="PhylomeDB" id="Q6ZMP0"/>
<dbReference type="TreeFam" id="TF316874"/>
<dbReference type="PathwayCommons" id="Q6ZMP0"/>
<dbReference type="Reactome" id="R-HSA-5083635">
    <property type="pathway name" value="Defective B3GALTL causes PpS"/>
</dbReference>
<dbReference type="Reactome" id="R-HSA-5173214">
    <property type="pathway name" value="O-glycosylation of TSR domain-containing proteins"/>
</dbReference>
<dbReference type="SignaLink" id="Q6ZMP0"/>
<dbReference type="BioGRID-ORCS" id="79875">
    <property type="hits" value="8 hits in 1144 CRISPR screens"/>
</dbReference>
<dbReference type="ChiTaRS" id="THSD4">
    <property type="organism name" value="human"/>
</dbReference>
<dbReference type="GenomeRNAi" id="79875"/>
<dbReference type="Pharos" id="Q6ZMP0">
    <property type="development level" value="Tbio"/>
</dbReference>
<dbReference type="PRO" id="PR:Q6ZMP0"/>
<dbReference type="Proteomes" id="UP000005640">
    <property type="component" value="Chromosome 15"/>
</dbReference>
<dbReference type="RNAct" id="Q6ZMP0">
    <property type="molecule type" value="protein"/>
</dbReference>
<dbReference type="Bgee" id="ENSG00000187720">
    <property type="expression patterns" value="Expressed in buccal mucosa cell and 153 other cell types or tissues"/>
</dbReference>
<dbReference type="ExpressionAtlas" id="Q6ZMP0">
    <property type="expression patterns" value="baseline and differential"/>
</dbReference>
<dbReference type="GO" id="GO:0062023">
    <property type="term" value="C:collagen-containing extracellular matrix"/>
    <property type="evidence" value="ECO:0007005"/>
    <property type="project" value="BHF-UCL"/>
</dbReference>
<dbReference type="GO" id="GO:0070062">
    <property type="term" value="C:extracellular exosome"/>
    <property type="evidence" value="ECO:0007005"/>
    <property type="project" value="UniProtKB"/>
</dbReference>
<dbReference type="GO" id="GO:0001527">
    <property type="term" value="C:microfibril"/>
    <property type="evidence" value="ECO:0000315"/>
    <property type="project" value="UniProtKB"/>
</dbReference>
<dbReference type="GO" id="GO:0016787">
    <property type="term" value="F:hydrolase activity"/>
    <property type="evidence" value="ECO:0007669"/>
    <property type="project" value="UniProtKB-KW"/>
</dbReference>
<dbReference type="GO" id="GO:0048251">
    <property type="term" value="P:elastic fiber assembly"/>
    <property type="evidence" value="ECO:0007669"/>
    <property type="project" value="Ensembl"/>
</dbReference>
<dbReference type="GO" id="GO:0160054">
    <property type="term" value="P:microfibril assembly"/>
    <property type="evidence" value="ECO:0000315"/>
    <property type="project" value="UniProtKB"/>
</dbReference>
<dbReference type="FunFam" id="2.60.120.830:FF:000001">
    <property type="entry name" value="A disintegrin and metalloproteinase with thrombospondin motifs 1"/>
    <property type="match status" value="1"/>
</dbReference>
<dbReference type="FunFam" id="2.20.100.10:FF:000005">
    <property type="entry name" value="ADAM metallopeptidase with thrombospondin type 1 motif 9"/>
    <property type="match status" value="1"/>
</dbReference>
<dbReference type="FunFam" id="2.20.100.10:FF:000044">
    <property type="entry name" value="Thrombospondin type 1 domain containing 4"/>
    <property type="match status" value="1"/>
</dbReference>
<dbReference type="FunFam" id="2.20.100.10:FF:000047">
    <property type="entry name" value="Thrombospondin type 1 domain containing 4"/>
    <property type="match status" value="1"/>
</dbReference>
<dbReference type="FunFam" id="2.20.100.10:FF:000171">
    <property type="entry name" value="Thrombospondin type 1 domain containing 4"/>
    <property type="match status" value="1"/>
</dbReference>
<dbReference type="FunFam" id="2.20.100.10:FF:000023">
    <property type="entry name" value="Thrombospondin type-1 domain-containing protein 4"/>
    <property type="match status" value="1"/>
</dbReference>
<dbReference type="FunFam" id="2.20.100.10:FF:000039">
    <property type="entry name" value="thrombospondin type-1 domain-containing protein 4"/>
    <property type="match status" value="1"/>
</dbReference>
<dbReference type="Gene3D" id="2.60.120.830">
    <property type="match status" value="1"/>
</dbReference>
<dbReference type="Gene3D" id="2.20.100.10">
    <property type="entry name" value="Thrombospondin type-1 (TSP1) repeat"/>
    <property type="match status" value="7"/>
</dbReference>
<dbReference type="InterPro" id="IPR050439">
    <property type="entry name" value="ADAMTS_ADAMTS-like"/>
</dbReference>
<dbReference type="InterPro" id="IPR045371">
    <property type="entry name" value="ADAMTS_CR_3"/>
</dbReference>
<dbReference type="InterPro" id="IPR010294">
    <property type="entry name" value="ADAMTS_spacer1"/>
</dbReference>
<dbReference type="InterPro" id="IPR010909">
    <property type="entry name" value="PLAC"/>
</dbReference>
<dbReference type="InterPro" id="IPR000884">
    <property type="entry name" value="TSP1_rpt"/>
</dbReference>
<dbReference type="InterPro" id="IPR036383">
    <property type="entry name" value="TSP1_rpt_sf"/>
</dbReference>
<dbReference type="PANTHER" id="PTHR13723">
    <property type="entry name" value="ADAMTS A DISINTEGRIN AND METALLOPROTEASE WITH THROMBOSPONDIN MOTIFS PROTEASE"/>
    <property type="match status" value="1"/>
</dbReference>
<dbReference type="PANTHER" id="PTHR13723:SF16">
    <property type="entry name" value="THROMBOSPONDIN TYPE-1 DOMAIN-CONTAINING PROTEIN 4"/>
    <property type="match status" value="1"/>
</dbReference>
<dbReference type="Pfam" id="PF19236">
    <property type="entry name" value="ADAMTS_CR_3"/>
    <property type="match status" value="1"/>
</dbReference>
<dbReference type="Pfam" id="PF05986">
    <property type="entry name" value="ADAMTS_spacer1"/>
    <property type="match status" value="1"/>
</dbReference>
<dbReference type="Pfam" id="PF08686">
    <property type="entry name" value="PLAC"/>
    <property type="match status" value="1"/>
</dbReference>
<dbReference type="Pfam" id="PF19030">
    <property type="entry name" value="TSP1_ADAMTS"/>
    <property type="match status" value="6"/>
</dbReference>
<dbReference type="Pfam" id="PF00090">
    <property type="entry name" value="TSP_1"/>
    <property type="match status" value="1"/>
</dbReference>
<dbReference type="SMART" id="SM00209">
    <property type="entry name" value="TSP1"/>
    <property type="match status" value="7"/>
</dbReference>
<dbReference type="SUPFAM" id="SSF82895">
    <property type="entry name" value="TSP-1 type 1 repeat"/>
    <property type="match status" value="7"/>
</dbReference>
<dbReference type="PROSITE" id="PS50900">
    <property type="entry name" value="PLAC"/>
    <property type="match status" value="1"/>
</dbReference>
<dbReference type="PROSITE" id="PS50092">
    <property type="entry name" value="TSP1"/>
    <property type="match status" value="6"/>
</dbReference>
<comment type="function">
    <text evidence="5">Promotes FBN1 matrix assembly. Attenuates TGFB signaling, possibly by accelerating the sequestration of large latent complexes of TGFB or active TGFB by FBN1 microfibril assembly, thereby negatively regulating the expression of TGFB regulatory targets, such as POSTN.</text>
</comment>
<comment type="subunit">
    <text evidence="5">Interacts with FBN1. May interact with TGFB1.</text>
</comment>
<comment type="subcellular location">
    <subcellularLocation>
        <location evidence="5">Secreted</location>
        <location evidence="5">Extracellular space</location>
        <location evidence="5">Extracellular matrix</location>
    </subcellularLocation>
</comment>
<comment type="alternative products">
    <event type="alternative splicing"/>
    <isoform>
        <id>Q6ZMP0-1</id>
        <name>1</name>
        <sequence type="displayed"/>
    </isoform>
    <isoform>
        <id>Q6ZMP0-2</id>
        <name>2</name>
        <sequence type="described" ref="VSP_030039 VSP_030040"/>
    </isoform>
    <isoform>
        <id>Q6ZMP0-3</id>
        <name>3</name>
        <sequence type="described" ref="VSP_030036 VSP_030037 VSP_030038 VSP_030041"/>
    </isoform>
    <isoform>
        <id>Q6ZMP0-4</id>
        <name>4</name>
        <sequence type="described" ref="VSP_054877 VSP_054878"/>
    </isoform>
</comment>
<comment type="disease" evidence="5">
    <disease id="DI-06389">
        <name>Aortic aneurysm, familial thoracic 12</name>
        <acronym>AAT12</acronym>
        <description>A form of thoracic aortic aneurysm, a disease characterized by permanent dilation of the thoracic aorta usually due to degenerative changes in the aortic wall. It is primarily associated with a characteristic histologic appearance known as 'medial necrosis' or 'Erdheim cystic medial necrosis' in which there is degeneration and fragmentation of elastic fibers, loss of smooth muscle cells, and an accumulation of basophilic ground substance. AAT12 is an autosomal dominant disease manifesting with aortic dissection and progressive dilation of the aortic root, ascending aorta, and abdominal aorta.</description>
        <dbReference type="MIM" id="619825"/>
    </disease>
    <text>The disease may be caused by variants affecting the gene represented in this entry.</text>
</comment>
<comment type="sequence caution" evidence="9">
    <conflict type="erroneous initiation">
        <sequence resource="EMBL-CDS" id="BAB14673"/>
    </conflict>
    <text>Truncated N-terminus.</text>
</comment>
<protein>
    <recommendedName>
        <fullName>Thrombospondin type-1 domain-containing protein 4</fullName>
    </recommendedName>
    <alternativeName>
        <fullName>A disintegrin and metalloproteinase with thrombospondin motifs-like protein 6</fullName>
        <shortName>ADAMTS-like protein 6</shortName>
        <shortName>ADAMTSL-6</shortName>
    </alternativeName>
</protein>
<name>THSD4_HUMAN</name>
<proteinExistence type="evidence at protein level"/>